<sequence>MAVCTVYTIPTTTHLGSSFNQNNKQVFFNYKRSSSSNNTLFTTRPSYVITCSQQQTIVIGLAADSGCGKSTFMRRLTSVFGGAAEPPKGGNPDSNTLISDTTTVICLDDFHSLDRNGRKVEKVTALDPKANDFDLMYEQVKALKEGKAVDKPIYNHVSGLLDPPELIQPPKILVIEGLHPMYDARVRELLDFSIYLDISNEVKFAWKIQRDMKERGHSLESIKASIESRKPDFDAYIDPQKQHADVVIEVLPTELIPDDDEGKVLRVRMIQKEGVKFFNPVYLFDEGSTISWIPCGRKLTCSYPGIKFSYGPDTFYGNEVTVVEMDGMFDRLDELIYVESHLSNLSTKFYGEVTQQMLKHQNFPGSNNGTGFFQTIIGLKIRDLFEQLVASRSTATATAAKA</sequence>
<evidence type="ECO:0000269" key="1">
    <source>
    </source>
</evidence>
<evidence type="ECO:0000269" key="2">
    <source>
    </source>
</evidence>
<evidence type="ECO:0000269" key="3">
    <source ref="4"/>
</evidence>
<evidence type="ECO:0000305" key="4"/>
<feature type="transit peptide" description="Chloroplast" evidence="2 3">
    <location>
        <begin position="1"/>
        <end position="51"/>
    </location>
</feature>
<feature type="chain" id="PRO_0000025754" description="Phosphoribulokinase, chloroplastic">
    <location>
        <begin position="52"/>
        <end position="402"/>
    </location>
</feature>
<feature type="disulfide bond" evidence="1">
    <location>
        <begin position="67"/>
        <end position="106"/>
    </location>
</feature>
<organism>
    <name type="scientific">Spinacia oleracea</name>
    <name type="common">Spinach</name>
    <dbReference type="NCBI Taxonomy" id="3562"/>
    <lineage>
        <taxon>Eukaryota</taxon>
        <taxon>Viridiplantae</taxon>
        <taxon>Streptophyta</taxon>
        <taxon>Embryophyta</taxon>
        <taxon>Tracheophyta</taxon>
        <taxon>Spermatophyta</taxon>
        <taxon>Magnoliopsida</taxon>
        <taxon>eudicotyledons</taxon>
        <taxon>Gunneridae</taxon>
        <taxon>Pentapetalae</taxon>
        <taxon>Caryophyllales</taxon>
        <taxon>Chenopodiaceae</taxon>
        <taxon>Chenopodioideae</taxon>
        <taxon>Anserineae</taxon>
        <taxon>Spinacia</taxon>
    </lineage>
</organism>
<accession>P09559</accession>
<reference key="1">
    <citation type="journal article" date="1988" name="Nucleic Acids Res.">
        <title>Nucleotide sequence of spinach cDNA encoding phosphoribulokinase.</title>
        <authorList>
            <person name="Roesler K.R."/>
            <person name="Ogren W.L."/>
        </authorList>
    </citation>
    <scope>NUCLEOTIDE SEQUENCE [MRNA]</scope>
</reference>
<reference key="2">
    <citation type="journal article" date="1988" name="Gene">
        <title>Cloning and sequencing of cDNA encoding the mature form of phosphoribulokinase from spinach.</title>
        <authorList>
            <person name="Milanez S."/>
            <person name="Mural R.J."/>
        </authorList>
    </citation>
    <scope>NUCLEOTIDE SEQUENCE [MRNA] OF 7-402</scope>
</reference>
<reference key="3">
    <citation type="journal article" date="1986" name="Arch. Biochem. Biophys.">
        <title>Purification and characterization of ribulose-5-phosphate kinase from spinach.</title>
        <authorList>
            <person name="Porter M.A."/>
            <person name="Milanez S."/>
            <person name="Stringer C.D."/>
            <person name="Hartman F.C."/>
        </authorList>
    </citation>
    <scope>PROTEIN SEQUENCE OF 52-69</scope>
</reference>
<reference key="4">
    <citation type="journal article" date="1986" name="Biochemistry">
        <title>Commonality of catalytic and regulatory sites of spinach phosphoribulokinase: characterization of a tryptic peptide that contains an essential cysteinyl residue.</title>
        <authorList>
            <person name="Porter M.A."/>
            <person name="Hartman F.C."/>
        </authorList>
    </citation>
    <scope>PROTEIN SEQUENCE OF 52-69</scope>
</reference>
<reference key="5">
    <citation type="journal article" date="1988" name="J. Biol. Chem.">
        <title>Characterization of the regulatory thioredoxin site of phosphoribulokinase.</title>
        <authorList>
            <person name="Porter M.A."/>
            <person name="Stringer C.D."/>
            <person name="Hartman F.C."/>
        </authorList>
    </citation>
    <scope>DISULFIDE BOND</scope>
    <scope>PARTIAL PROTEIN SEQUENCE</scope>
</reference>
<keyword id="KW-0067">ATP-binding</keyword>
<keyword id="KW-0113">Calvin cycle</keyword>
<keyword id="KW-0150">Chloroplast</keyword>
<keyword id="KW-0903">Direct protein sequencing</keyword>
<keyword id="KW-1015">Disulfide bond</keyword>
<keyword id="KW-0418">Kinase</keyword>
<keyword id="KW-0547">Nucleotide-binding</keyword>
<keyword id="KW-0602">Photosynthesis</keyword>
<keyword id="KW-0934">Plastid</keyword>
<keyword id="KW-1185">Reference proteome</keyword>
<keyword id="KW-0808">Transferase</keyword>
<keyword id="KW-0809">Transit peptide</keyword>
<name>KPPR_SPIOL</name>
<dbReference type="EC" id="2.7.1.19"/>
<dbReference type="EMBL" id="X07654">
    <property type="protein sequence ID" value="CAA30499.1"/>
    <property type="molecule type" value="mRNA"/>
</dbReference>
<dbReference type="EMBL" id="M21338">
    <property type="protein sequence ID" value="AAA34036.1"/>
    <property type="status" value="ALT_INIT"/>
    <property type="molecule type" value="mRNA"/>
</dbReference>
<dbReference type="PIR" id="S02099">
    <property type="entry name" value="S02099"/>
</dbReference>
<dbReference type="RefSeq" id="NP_001413345.1">
    <property type="nucleotide sequence ID" value="NM_001426416.1"/>
</dbReference>
<dbReference type="SMR" id="P09559"/>
<dbReference type="GeneID" id="110791203"/>
<dbReference type="OrthoDB" id="738517at2759"/>
<dbReference type="BRENDA" id="2.7.1.19">
    <property type="organism ID" value="5812"/>
</dbReference>
<dbReference type="SABIO-RK" id="P09559"/>
<dbReference type="UniPathway" id="UPA00116"/>
<dbReference type="Proteomes" id="UP001155700">
    <property type="component" value="Unplaced"/>
</dbReference>
<dbReference type="GO" id="GO:0009507">
    <property type="term" value="C:chloroplast"/>
    <property type="evidence" value="ECO:0007669"/>
    <property type="project" value="UniProtKB-SubCell"/>
</dbReference>
<dbReference type="GO" id="GO:0005737">
    <property type="term" value="C:cytoplasm"/>
    <property type="evidence" value="ECO:0000318"/>
    <property type="project" value="GO_Central"/>
</dbReference>
<dbReference type="GO" id="GO:0005524">
    <property type="term" value="F:ATP binding"/>
    <property type="evidence" value="ECO:0007669"/>
    <property type="project" value="UniProtKB-KW"/>
</dbReference>
<dbReference type="GO" id="GO:0008974">
    <property type="term" value="F:phosphoribulokinase activity"/>
    <property type="evidence" value="ECO:0007669"/>
    <property type="project" value="UniProtKB-EC"/>
</dbReference>
<dbReference type="GO" id="GO:0019253">
    <property type="term" value="P:reductive pentose-phosphate cycle"/>
    <property type="evidence" value="ECO:0007669"/>
    <property type="project" value="UniProtKB-UniPathway"/>
</dbReference>
<dbReference type="CDD" id="cd02026">
    <property type="entry name" value="PRK"/>
    <property type="match status" value="1"/>
</dbReference>
<dbReference type="FunFam" id="3.40.50.300:FF:000619">
    <property type="entry name" value="Phosphoribulokinase"/>
    <property type="match status" value="1"/>
</dbReference>
<dbReference type="Gene3D" id="3.40.50.300">
    <property type="entry name" value="P-loop containing nucleotide triphosphate hydrolases"/>
    <property type="match status" value="1"/>
</dbReference>
<dbReference type="InterPro" id="IPR027417">
    <property type="entry name" value="P-loop_NTPase"/>
</dbReference>
<dbReference type="InterPro" id="IPR006082">
    <property type="entry name" value="PRK"/>
</dbReference>
<dbReference type="InterPro" id="IPR006083">
    <property type="entry name" value="PRK/URK"/>
</dbReference>
<dbReference type="NCBIfam" id="NF005655">
    <property type="entry name" value="PRK07429.1"/>
    <property type="match status" value="1"/>
</dbReference>
<dbReference type="PANTHER" id="PTHR10285">
    <property type="entry name" value="URIDINE KINASE"/>
    <property type="match status" value="1"/>
</dbReference>
<dbReference type="Pfam" id="PF00485">
    <property type="entry name" value="PRK"/>
    <property type="match status" value="1"/>
</dbReference>
<dbReference type="PRINTS" id="PR00478">
    <property type="entry name" value="PHRIBLKINASE"/>
</dbReference>
<dbReference type="SUPFAM" id="SSF52540">
    <property type="entry name" value="P-loop containing nucleoside triphosphate hydrolases"/>
    <property type="match status" value="1"/>
</dbReference>
<dbReference type="PROSITE" id="PS00567">
    <property type="entry name" value="PHOSPHORIBULOKINASE"/>
    <property type="match status" value="1"/>
</dbReference>
<protein>
    <recommendedName>
        <fullName>Phosphoribulokinase, chloroplastic</fullName>
        <shortName>PRK</shortName>
        <shortName>PRKase</shortName>
        <ecNumber>2.7.1.19</ecNumber>
    </recommendedName>
    <alternativeName>
        <fullName>Phosphopentokinase</fullName>
    </alternativeName>
</protein>
<comment type="catalytic activity">
    <reaction>
        <text>D-ribulose 5-phosphate + ATP = D-ribulose 1,5-bisphosphate + ADP + H(+)</text>
        <dbReference type="Rhea" id="RHEA:19365"/>
        <dbReference type="ChEBI" id="CHEBI:15378"/>
        <dbReference type="ChEBI" id="CHEBI:30616"/>
        <dbReference type="ChEBI" id="CHEBI:57870"/>
        <dbReference type="ChEBI" id="CHEBI:58121"/>
        <dbReference type="ChEBI" id="CHEBI:456216"/>
        <dbReference type="EC" id="2.7.1.19"/>
    </reaction>
</comment>
<comment type="activity regulation">
    <text>Light regulated via thioredoxin by reversible oxidation/reduction of sulfhydryl/disulfide groups.</text>
</comment>
<comment type="pathway">
    <text>Carbohydrate biosynthesis; Calvin cycle.</text>
</comment>
<comment type="subcellular location">
    <subcellularLocation>
        <location>Plastid</location>
        <location>Chloroplast</location>
    </subcellularLocation>
</comment>
<comment type="similarity">
    <text evidence="4">Belongs to the phosphoribulokinase family.</text>
</comment>
<comment type="sequence caution" evidence="4">
    <conflict type="erroneous initiation">
        <sequence resource="EMBL-CDS" id="AAA34036"/>
    </conflict>
</comment>
<proteinExistence type="evidence at protein level"/>